<protein>
    <recommendedName>
        <fullName>Fusion glycoprotein F0</fullName>
    </recommendedName>
    <component>
        <recommendedName>
            <fullName evidence="1">Fusion glycoprotein F2</fullName>
            <shortName>F2</shortName>
        </recommendedName>
    </component>
    <component>
        <recommendedName>
            <fullName evidence="1">p27</fullName>
        </recommendedName>
        <alternativeName>
            <fullName>Intervening segment</fullName>
        </alternativeName>
        <alternativeName>
            <fullName>Pep27</fullName>
        </alternativeName>
        <alternativeName>
            <fullName>Peptide 27</fullName>
        </alternativeName>
    </component>
    <component>
        <recommendedName>
            <fullName evidence="1">Fusion glycoprotein F1</fullName>
            <shortName>F1</shortName>
        </recommendedName>
    </component>
</protein>
<feature type="signal peptide" evidence="3">
    <location>
        <begin position="1"/>
        <end position="25"/>
    </location>
</feature>
<feature type="chain" id="PRO_0000039231" description="Fusion glycoprotein F0">
    <location>
        <begin position="26"/>
        <end position="574"/>
    </location>
</feature>
<feature type="chain" id="PRO_0000039232" description="Fusion glycoprotein F2">
    <location>
        <begin position="26"/>
        <end position="109"/>
    </location>
</feature>
<feature type="peptide" id="PRO_0000432662" description="p27" evidence="1">
    <location>
        <begin position="110"/>
        <end position="136"/>
    </location>
</feature>
<feature type="chain" id="PRO_0000039233" description="Fusion glycoprotein F1">
    <location>
        <begin position="137"/>
        <end position="574"/>
    </location>
</feature>
<feature type="topological domain" description="Extracellular" evidence="1">
    <location>
        <begin position="26"/>
        <end position="524"/>
    </location>
</feature>
<feature type="transmembrane region" description="Helical" evidence="1">
    <location>
        <begin position="525"/>
        <end position="550"/>
    </location>
</feature>
<feature type="topological domain" description="Cytoplasmic" evidence="1">
    <location>
        <begin position="551"/>
        <end position="574"/>
    </location>
</feature>
<feature type="region of interest" description="Fusion peptide" evidence="2">
    <location>
        <begin position="137"/>
        <end position="157"/>
    </location>
</feature>
<feature type="coiled-coil region" evidence="2">
    <location>
        <begin position="76"/>
        <end position="96"/>
    </location>
</feature>
<feature type="coiled-coil region" evidence="2">
    <location>
        <begin position="158"/>
        <end position="209"/>
    </location>
</feature>
<feature type="coiled-coil region" evidence="2">
    <location>
        <begin position="481"/>
        <end position="516"/>
    </location>
</feature>
<feature type="site" description="Cleavage; by host furin-like protease" evidence="1">
    <location>
        <begin position="109"/>
        <end position="110"/>
    </location>
</feature>
<feature type="site" description="Cleavage; by host furin-like protease" evidence="1">
    <location>
        <begin position="136"/>
        <end position="137"/>
    </location>
</feature>
<feature type="glycosylation site" description="N-linked (GlcNAc...) asparagine; by host" evidence="1">
    <location>
        <position position="27"/>
    </location>
</feature>
<feature type="glycosylation site" description="N-linked (GlcNAc...) asparagine; by host" evidence="1">
    <location>
        <position position="70"/>
    </location>
</feature>
<feature type="glycosylation site" description="N-linked (GlcNAc...) asparagine; by host" evidence="3">
    <location>
        <position position="120"/>
    </location>
</feature>
<feature type="glycosylation site" description="N-linked (GlcNAc...) asparagine; by host" evidence="1">
    <location>
        <position position="500"/>
    </location>
</feature>
<feature type="disulfide bond" description="Interchain (between F2 and F1 chains)" evidence="1">
    <location>
        <begin position="37"/>
        <end position="439"/>
    </location>
</feature>
<feature type="disulfide bond" description="Interchain (between F2 and F1 chains)" evidence="1">
    <location>
        <begin position="69"/>
        <end position="212"/>
    </location>
</feature>
<feature type="disulfide bond" evidence="1">
    <location>
        <begin position="313"/>
        <end position="343"/>
    </location>
</feature>
<feature type="disulfide bond" evidence="1">
    <location>
        <begin position="322"/>
        <end position="333"/>
    </location>
</feature>
<feature type="disulfide bond" evidence="1">
    <location>
        <begin position="358"/>
        <end position="367"/>
    </location>
</feature>
<feature type="disulfide bond" evidence="1">
    <location>
        <begin position="382"/>
        <end position="393"/>
    </location>
</feature>
<feature type="disulfide bond" evidence="1">
    <location>
        <begin position="416"/>
        <end position="422"/>
    </location>
</feature>
<proteinExistence type="evidence at transcript level"/>
<gene>
    <name type="primary">F</name>
</gene>
<name>FUS_BRSVR</name>
<comment type="function">
    <molecule>Fusion glycoprotein F0</molecule>
    <text evidence="1">Inactive precursor that is cleaved at two sites by a furin-like protease to give rise to the mature F1 and F2 fusion glycoproteins.</text>
</comment>
<comment type="function">
    <molecule>Fusion glycoprotein F1</molecule>
    <text evidence="1">Class I viral fusion protein. Under the current model, the protein has at least 3 conformational states: pre-fusion native state, pre-hairpin intermediate state, and post-fusion hairpin state. During viral and plasma cell membrane fusion, the coiled coil regions assume a trimer-of-hairpins structure, positioning the fusion peptide in close proximity to the C-terminal region of the ectodomain. The formation of this structure appears to drive apposition and subsequent fusion of viral and cellular membranes leading to delivery of the nucleocapsid into the cytoplasm. This fusion is pH independent and occurs at the plasma or endosomal membrane. The trimer of F1-F2 (F protein) also facilitates the attachment and entry into the host cell. Later in infection, F protein expressed at the plasma membrane of infected cells can mediate fusion with adjacent cells to form syncytia, a cytopathic effect that could lead to tissue necrosis.</text>
</comment>
<comment type="function">
    <molecule>Fusion glycoprotein F2</molecule>
    <text evidence="1">Major determinant of the species specificity of RSV infection. The trimer of F1-F2 (F protein) also facilitates the attachment and entry into the host cell. Later in infection, F protein expressed at the plasma membrane of infected cells can mediate fusion with adjacent cells to form syncytia, a cytopathic effect that could lead to tissue necrosis.</text>
</comment>
<comment type="subunit">
    <molecule>Fusion glycoprotein F1</molecule>
    <text evidence="1">Homotrimer. Heterodimer with fusion protein F2; disulfide-linked. Part of a complex composed of F1, F2 and G glycoproteins. As a heterodimer with F2, interacts with host RHOA; this interaction facilitates virus-induced syncytium formation.</text>
</comment>
<comment type="subunit">
    <molecule>Fusion glycoprotein F2</molecule>
    <text evidence="1">Homotrimer. Heterodimer with fusion protein F1; disulfide-linked. Part of a complex composed of F1, F2 and G glycoproteins. As a heterodimer with F1, interacts with host RHOA; this interaction facilitates virus-induced syncytium formation.</text>
</comment>
<comment type="subcellular location">
    <molecule>Fusion glycoprotein F0</molecule>
    <subcellularLocation>
        <location evidence="1">Host Golgi apparatus membrane</location>
        <topology evidence="1">Single-pass membrane protein</topology>
    </subcellularLocation>
</comment>
<comment type="subcellular location">
    <molecule>Fusion glycoprotein F1</molecule>
    <subcellularLocation>
        <location evidence="1">Virion membrane</location>
        <topology evidence="1">Single-pass type I membrane protein</topology>
    </subcellularLocation>
    <subcellularLocation>
        <location evidence="1">Host cell membrane</location>
        <topology evidence="1">Single-pass membrane protein</topology>
    </subcellularLocation>
    <text evidence="1">Localized at the host apical membrane.</text>
</comment>
<comment type="subcellular location">
    <molecule>Fusion glycoprotein F2</molecule>
    <subcellularLocation>
        <location evidence="1">Virion membrane</location>
    </subcellularLocation>
    <subcellularLocation>
        <location evidence="1">Host cell membrane</location>
    </subcellularLocation>
    <text evidence="1">Localized at the host apical membrane.</text>
</comment>
<comment type="domain">
    <molecule>Fusion glycoprotein F0</molecule>
    <text evidence="1 2">The N-terminus is a hydrophobic fusion peptide that inserts into the target host membrane (By similarity). It is buried in the center of the trimer cavity before cleavage by host furin. The coiled coil (heptad repeat) regions are probably involved in homotrimerization, heterodimerization and in the formation of a fusion-active hairpin structure (By similarity).</text>
</comment>
<comment type="domain">
    <molecule>Fusion glycoprotein F1</molecule>
    <text evidence="1 2">The N-terminus is a hydrophobic fusion peptide that inserts into the target host membrane (By similarity). It is buried in the center of the trimer cavity before cleavage by host furin. The coiled coil (heptad repeat) regions are probably involved in homotrimerization, heterodimerization and in the formation of a fusion-active hairpin structure (By similarity).</text>
</comment>
<comment type="PTM">
    <molecule>Fusion glycoprotein F0</molecule>
    <text evidence="1">The F glycoprotein is synthesized as a F0 inactive precursor that is heavily N-glycosylated and processed at two sites by a host furin-like protease probably in the Golgi. The cleavage site between p27 and F1 may occur after endocytosis to yield the mature F1 and F2 proteins. Both cleavages are required for membrane fusion and p27 is released from the processed protein.</text>
</comment>
<comment type="similarity">
    <text evidence="4">Belongs to the paramyxoviruses fusion glycoprotein family.</text>
</comment>
<comment type="caution">
    <text evidence="4">Ser-550 is present instead of the conserved Cys which is expected to bind palmitate.</text>
</comment>
<sequence length="574" mass="63631">MATTAMRMIISIIFISTYVTHITLCQNITEEFYQSTCSAVSRGYLSALRTGWYTSVVTIELSKIQKNVCNSTDSNVKLIKQELERYNNAVVELQSLMQNEPASSSRAKRGIPELIHYKRNSTKKFYGLMGKKRKRRFLGFLLGIGSAIASGVAVSKVLHLEGEVNKIKNALLSTNKAVVSLSNGVSVLTSKVLDLKNYIDKELLPKVNNHDCKISNIATVIEFQQKNNRLLEIAREFSVNAGITTPLSTYMLTNSELLSLINDMPITNDQKKLMSSNVQIVRQQSYSIMSVVKEEVMAYVVQLPIYGVIDTPCWKLHTSPLCTTDNKEGSNICLTRTDRGWYCDNAGSVSFFPQAETCKVQSNRVFCDTMNSLTLPTDVNLCNTDIFNAKYDCKIMTSKTDISSSVITSIGAIVSCYGKTKCTASNKNRGIIKTFSNGCDYVSNRGVDTVSVGNTLYYVNKLEGKALYIKGEPIINYYDPLVFPSDEFDASIAQVNAKINQSLAFIRRSDELLHSVDVGKSTTNVVITTIIIVIVVVILMLIAVGLLFYSKTRSTPIMLGKDQLSGINNLSFSK</sequence>
<accession>P23728</accession>
<reference key="1">
    <citation type="journal article" date="1990" name="J. Gen. Virol.">
        <title>Sequence comparison between the fusion protein of human and bovine respiratory syncytial viruses.</title>
        <authorList>
            <person name="Walravens K."/>
            <person name="Kettmann R."/>
            <person name="Collard A."/>
            <person name="Coppe P."/>
            <person name="Burny A."/>
        </authorList>
    </citation>
    <scope>NUCLEOTIDE SEQUENCE [MRNA]</scope>
</reference>
<organismHost>
    <name type="scientific">Bos taurus</name>
    <name type="common">Bovine</name>
    <dbReference type="NCBI Taxonomy" id="9913"/>
</organismHost>
<dbReference type="EMBL" id="D00953">
    <property type="protein sequence ID" value="BAA00798.1"/>
    <property type="molecule type" value="mRNA"/>
</dbReference>
<dbReference type="PIR" id="JH0233">
    <property type="entry name" value="VGNZBS"/>
</dbReference>
<dbReference type="SMR" id="P23728"/>
<dbReference type="GlyCosmos" id="P23728">
    <property type="glycosylation" value="4 sites, No reported glycans"/>
</dbReference>
<dbReference type="ABCD" id="P23728">
    <property type="antibodies" value="4 sequenced antibodies"/>
</dbReference>
<dbReference type="GO" id="GO:0044178">
    <property type="term" value="C:host cell Golgi membrane"/>
    <property type="evidence" value="ECO:0007669"/>
    <property type="project" value="UniProtKB-SubCell"/>
</dbReference>
<dbReference type="GO" id="GO:0020002">
    <property type="term" value="C:host cell plasma membrane"/>
    <property type="evidence" value="ECO:0007669"/>
    <property type="project" value="UniProtKB-SubCell"/>
</dbReference>
<dbReference type="GO" id="GO:0016020">
    <property type="term" value="C:membrane"/>
    <property type="evidence" value="ECO:0007669"/>
    <property type="project" value="UniProtKB-KW"/>
</dbReference>
<dbReference type="GO" id="GO:0019031">
    <property type="term" value="C:viral envelope"/>
    <property type="evidence" value="ECO:0007669"/>
    <property type="project" value="UniProtKB-KW"/>
</dbReference>
<dbReference type="GO" id="GO:0055036">
    <property type="term" value="C:virion membrane"/>
    <property type="evidence" value="ECO:0007669"/>
    <property type="project" value="UniProtKB-SubCell"/>
</dbReference>
<dbReference type="GO" id="GO:0098670">
    <property type="term" value="P:entry receptor-mediated virion attachment to host cell"/>
    <property type="evidence" value="ECO:0007669"/>
    <property type="project" value="UniProtKB-KW"/>
</dbReference>
<dbReference type="GO" id="GO:0019064">
    <property type="term" value="P:fusion of virus membrane with host plasma membrane"/>
    <property type="evidence" value="ECO:0007669"/>
    <property type="project" value="UniProtKB-KW"/>
</dbReference>
<dbReference type="GO" id="GO:0046718">
    <property type="term" value="P:symbiont entry into host cell"/>
    <property type="evidence" value="ECO:0007669"/>
    <property type="project" value="UniProtKB-KW"/>
</dbReference>
<dbReference type="GO" id="GO:0060141">
    <property type="term" value="P:symbiont-mediated induction of syncytium formation"/>
    <property type="evidence" value="ECO:0007669"/>
    <property type="project" value="UniProtKB-KW"/>
</dbReference>
<dbReference type="FunFam" id="1.10.287.2480:FF:000001">
    <property type="entry name" value="Fusion glycoprotein F0"/>
    <property type="match status" value="1"/>
</dbReference>
<dbReference type="Gene3D" id="1.10.287.2480">
    <property type="match status" value="2"/>
</dbReference>
<dbReference type="Gene3D" id="6.10.250.1160">
    <property type="match status" value="1"/>
</dbReference>
<dbReference type="Gene3D" id="6.20.370.50">
    <property type="match status" value="1"/>
</dbReference>
<dbReference type="InterPro" id="IPR000776">
    <property type="entry name" value="Fusion_F0_Paramyxovir"/>
</dbReference>
<dbReference type="InterPro" id="IPR013055">
    <property type="entry name" value="Tachy_Neuro_lke_CS"/>
</dbReference>
<dbReference type="Pfam" id="PF00523">
    <property type="entry name" value="Fusion_gly"/>
    <property type="match status" value="1"/>
</dbReference>
<dbReference type="SUPFAM" id="SSF58069">
    <property type="entry name" value="Virus ectodomain"/>
    <property type="match status" value="2"/>
</dbReference>
<evidence type="ECO:0000250" key="1">
    <source>
        <dbReference type="UniProtKB" id="P03420"/>
    </source>
</evidence>
<evidence type="ECO:0000250" key="2">
    <source>
        <dbReference type="UniProtKB" id="P11209"/>
    </source>
</evidence>
<evidence type="ECO:0000255" key="3"/>
<evidence type="ECO:0000305" key="4"/>
<organism>
    <name type="scientific">Bovine respiratory syncytial virus (strain Rb94)</name>
    <name type="common">BRS</name>
    <dbReference type="NCBI Taxonomy" id="11249"/>
    <lineage>
        <taxon>Viruses</taxon>
        <taxon>Riboviria</taxon>
        <taxon>Orthornavirae</taxon>
        <taxon>Negarnaviricota</taxon>
        <taxon>Haploviricotina</taxon>
        <taxon>Monjiviricetes</taxon>
        <taxon>Mononegavirales</taxon>
        <taxon>Pneumoviridae</taxon>
        <taxon>Orthopneumovirus</taxon>
        <taxon>Orthopneumovirus bovis</taxon>
    </lineage>
</organism>
<keyword id="KW-0165">Cleavage on pair of basic residues</keyword>
<keyword id="KW-0175">Coiled coil</keyword>
<keyword id="KW-1015">Disulfide bond</keyword>
<keyword id="KW-1169">Fusion of virus membrane with host cell membrane</keyword>
<keyword id="KW-1168">Fusion of virus membrane with host membrane</keyword>
<keyword id="KW-0325">Glycoprotein</keyword>
<keyword id="KW-1032">Host cell membrane</keyword>
<keyword id="KW-1040">Host Golgi apparatus</keyword>
<keyword id="KW-1043">Host membrane</keyword>
<keyword id="KW-0945">Host-virus interaction</keyword>
<keyword id="KW-0472">Membrane</keyword>
<keyword id="KW-0732">Signal</keyword>
<keyword id="KW-1180">Syncytium formation induced by viral infection</keyword>
<keyword id="KW-0812">Transmembrane</keyword>
<keyword id="KW-1133">Transmembrane helix</keyword>
<keyword id="KW-1161">Viral attachment to host cell</keyword>
<keyword id="KW-1234">Viral attachment to host entry receptor</keyword>
<keyword id="KW-0261">Viral envelope protein</keyword>
<keyword id="KW-1162">Viral penetration into host cytoplasm</keyword>
<keyword id="KW-0946">Virion</keyword>
<keyword id="KW-1160">Virus entry into host cell</keyword>